<accession>Q2KDW6</accession>
<keyword id="KW-0067">ATP-binding</keyword>
<keyword id="KW-0143">Chaperone</keyword>
<keyword id="KW-0547">Nucleotide-binding</keyword>
<keyword id="KW-0597">Phosphoprotein</keyword>
<keyword id="KW-1185">Reference proteome</keyword>
<keyword id="KW-0346">Stress response</keyword>
<name>DNAK_RHIEC</name>
<dbReference type="EMBL" id="CP000133">
    <property type="protein sequence ID" value="ABC88970.1"/>
    <property type="molecule type" value="Genomic_DNA"/>
</dbReference>
<dbReference type="RefSeq" id="WP_011423539.1">
    <property type="nucleotide sequence ID" value="NC_007761.1"/>
</dbReference>
<dbReference type="SMR" id="Q2KDW6"/>
<dbReference type="KEGG" id="ret:RHE_CH00145"/>
<dbReference type="eggNOG" id="COG0443">
    <property type="taxonomic scope" value="Bacteria"/>
</dbReference>
<dbReference type="HOGENOM" id="CLU_005965_2_1_5"/>
<dbReference type="OrthoDB" id="9766019at2"/>
<dbReference type="Proteomes" id="UP000001936">
    <property type="component" value="Chromosome"/>
</dbReference>
<dbReference type="GO" id="GO:0005524">
    <property type="term" value="F:ATP binding"/>
    <property type="evidence" value="ECO:0007669"/>
    <property type="project" value="UniProtKB-UniRule"/>
</dbReference>
<dbReference type="GO" id="GO:0140662">
    <property type="term" value="F:ATP-dependent protein folding chaperone"/>
    <property type="evidence" value="ECO:0007669"/>
    <property type="project" value="InterPro"/>
</dbReference>
<dbReference type="GO" id="GO:0051082">
    <property type="term" value="F:unfolded protein binding"/>
    <property type="evidence" value="ECO:0007669"/>
    <property type="project" value="InterPro"/>
</dbReference>
<dbReference type="CDD" id="cd11733">
    <property type="entry name" value="ASKHA_NBD_HSP70_HSPA9"/>
    <property type="match status" value="1"/>
</dbReference>
<dbReference type="FunFam" id="2.60.34.10:FF:000014">
    <property type="entry name" value="Chaperone protein DnaK HSP70"/>
    <property type="match status" value="1"/>
</dbReference>
<dbReference type="FunFam" id="3.30.420.40:FF:000020">
    <property type="entry name" value="Chaperone protein HscA homolog"/>
    <property type="match status" value="1"/>
</dbReference>
<dbReference type="FunFam" id="1.20.1270.10:FF:000001">
    <property type="entry name" value="Molecular chaperone DnaK"/>
    <property type="match status" value="1"/>
</dbReference>
<dbReference type="FunFam" id="3.30.420.40:FF:000004">
    <property type="entry name" value="Molecular chaperone DnaK"/>
    <property type="match status" value="1"/>
</dbReference>
<dbReference type="FunFam" id="3.90.640.10:FF:000003">
    <property type="entry name" value="Molecular chaperone DnaK"/>
    <property type="match status" value="1"/>
</dbReference>
<dbReference type="Gene3D" id="1.20.1270.10">
    <property type="match status" value="1"/>
</dbReference>
<dbReference type="Gene3D" id="3.30.420.40">
    <property type="match status" value="2"/>
</dbReference>
<dbReference type="Gene3D" id="3.90.640.10">
    <property type="entry name" value="Actin, Chain A, domain 4"/>
    <property type="match status" value="1"/>
</dbReference>
<dbReference type="Gene3D" id="2.60.34.10">
    <property type="entry name" value="Substrate Binding Domain Of DNAk, Chain A, domain 1"/>
    <property type="match status" value="1"/>
</dbReference>
<dbReference type="HAMAP" id="MF_00332">
    <property type="entry name" value="DnaK"/>
    <property type="match status" value="1"/>
</dbReference>
<dbReference type="InterPro" id="IPR043129">
    <property type="entry name" value="ATPase_NBD"/>
</dbReference>
<dbReference type="InterPro" id="IPR012725">
    <property type="entry name" value="Chaperone_DnaK"/>
</dbReference>
<dbReference type="InterPro" id="IPR018181">
    <property type="entry name" value="Heat_shock_70_CS"/>
</dbReference>
<dbReference type="InterPro" id="IPR029048">
    <property type="entry name" value="HSP70_C_sf"/>
</dbReference>
<dbReference type="InterPro" id="IPR029047">
    <property type="entry name" value="HSP70_peptide-bd_sf"/>
</dbReference>
<dbReference type="InterPro" id="IPR013126">
    <property type="entry name" value="Hsp_70_fam"/>
</dbReference>
<dbReference type="NCBIfam" id="NF001413">
    <property type="entry name" value="PRK00290.1"/>
    <property type="match status" value="1"/>
</dbReference>
<dbReference type="NCBIfam" id="NF003520">
    <property type="entry name" value="PRK05183.1"/>
    <property type="match status" value="1"/>
</dbReference>
<dbReference type="NCBIfam" id="TIGR02350">
    <property type="entry name" value="prok_dnaK"/>
    <property type="match status" value="1"/>
</dbReference>
<dbReference type="PANTHER" id="PTHR19375">
    <property type="entry name" value="HEAT SHOCK PROTEIN 70KDA"/>
    <property type="match status" value="1"/>
</dbReference>
<dbReference type="Pfam" id="PF00012">
    <property type="entry name" value="HSP70"/>
    <property type="match status" value="1"/>
</dbReference>
<dbReference type="PRINTS" id="PR00301">
    <property type="entry name" value="HEATSHOCK70"/>
</dbReference>
<dbReference type="SUPFAM" id="SSF53067">
    <property type="entry name" value="Actin-like ATPase domain"/>
    <property type="match status" value="2"/>
</dbReference>
<dbReference type="SUPFAM" id="SSF100934">
    <property type="entry name" value="Heat shock protein 70kD (HSP70), C-terminal subdomain"/>
    <property type="match status" value="1"/>
</dbReference>
<dbReference type="SUPFAM" id="SSF100920">
    <property type="entry name" value="Heat shock protein 70kD (HSP70), peptide-binding domain"/>
    <property type="match status" value="1"/>
</dbReference>
<dbReference type="PROSITE" id="PS00297">
    <property type="entry name" value="HSP70_1"/>
    <property type="match status" value="1"/>
</dbReference>
<dbReference type="PROSITE" id="PS00329">
    <property type="entry name" value="HSP70_2"/>
    <property type="match status" value="1"/>
</dbReference>
<dbReference type="PROSITE" id="PS01036">
    <property type="entry name" value="HSP70_3"/>
    <property type="match status" value="1"/>
</dbReference>
<evidence type="ECO:0000255" key="1">
    <source>
        <dbReference type="HAMAP-Rule" id="MF_00332"/>
    </source>
</evidence>
<evidence type="ECO:0000256" key="2">
    <source>
        <dbReference type="SAM" id="MobiDB-lite"/>
    </source>
</evidence>
<feature type="chain" id="PRO_1000059640" description="Chaperone protein DnaK">
    <location>
        <begin position="1"/>
        <end position="638"/>
    </location>
</feature>
<feature type="region of interest" description="Disordered" evidence="2">
    <location>
        <begin position="604"/>
        <end position="638"/>
    </location>
</feature>
<feature type="compositionally biased region" description="Low complexity" evidence="2">
    <location>
        <begin position="604"/>
        <end position="618"/>
    </location>
</feature>
<feature type="modified residue" description="Phosphothreonine; by autocatalysis" evidence="1">
    <location>
        <position position="198"/>
    </location>
</feature>
<organism>
    <name type="scientific">Rhizobium etli (strain ATCC 51251 / DSM 11541 / JCM 21823 / NBRC 15573 / CFN 42)</name>
    <dbReference type="NCBI Taxonomy" id="347834"/>
    <lineage>
        <taxon>Bacteria</taxon>
        <taxon>Pseudomonadati</taxon>
        <taxon>Pseudomonadota</taxon>
        <taxon>Alphaproteobacteria</taxon>
        <taxon>Hyphomicrobiales</taxon>
        <taxon>Rhizobiaceae</taxon>
        <taxon>Rhizobium/Agrobacterium group</taxon>
        <taxon>Rhizobium</taxon>
    </lineage>
</organism>
<comment type="function">
    <text evidence="1">Acts as a chaperone.</text>
</comment>
<comment type="induction">
    <text evidence="1">By stress conditions e.g. heat shock.</text>
</comment>
<comment type="similarity">
    <text evidence="1">Belongs to the heat shock protein 70 family.</text>
</comment>
<sequence length="638" mass="68350">MAKVIGIDLGTTNSCVAVMDGKDAKVIENAEGARTTPSMVAFSDDGERLVGQPAKRQAVTNPTNTLFAVKRLIGRRYEDPTVEKDKHLVPFSIVKGDNGDAWVEANGKGYSPAQISAMILQKMKETAESYLGEKVEKAVITVPAYFNDAQRQATKDAGKIAGLEVLRIINEPTAAALAYGLDKKDGKTIAVYDLGGGTFDISILEIGDGVFEVKSTNGDTFLGGEDFDMRLVEYLVAEFKKDNGIDLKNDKLALQRLKEAAEKAKIELSSSQQTEINLPFITADASGPKHLTLKLTRAKLESLVDDLVQRTIAPCKAALKDAGVTAAEIDEVVLVGGMSRMPKVQEVVKQLFGKEPHKGVNPDEVVALGAAIQAGVLQGDVKDVLLLDVTPLSLGIETLGGVFTRLIERNTTIPTKKSQTFSTAEDNQQAVTIRVSQGEREMAADNKLLGQFDLVGLPPSPRGVPQIEVTFDIDANGIVQVSAKDKGTGKEQQIRIQASGGLSDADIEKMVKDAESHAAEDKKRRETVEAKNQAESLIHSTEKSLKDYGDKVSEADRTAISDAIAALKSSTEATEADAEDIKAKTQTLMEVSMKLGQAIYEAQQAEGGAAADASAEGGDNVVDADYEEIKDDDRKKSA</sequence>
<proteinExistence type="inferred from homology"/>
<protein>
    <recommendedName>
        <fullName evidence="1">Chaperone protein DnaK</fullName>
    </recommendedName>
    <alternativeName>
        <fullName evidence="1">HSP70</fullName>
    </alternativeName>
    <alternativeName>
        <fullName evidence="1">Heat shock 70 kDa protein</fullName>
    </alternativeName>
    <alternativeName>
        <fullName evidence="1">Heat shock protein 70</fullName>
    </alternativeName>
</protein>
<reference key="1">
    <citation type="journal article" date="2006" name="Proc. Natl. Acad. Sci. U.S.A.">
        <title>The partitioned Rhizobium etli genome: genetic and metabolic redundancy in seven interacting replicons.</title>
        <authorList>
            <person name="Gonzalez V."/>
            <person name="Santamaria R.I."/>
            <person name="Bustos P."/>
            <person name="Hernandez-Gonzalez I."/>
            <person name="Medrano-Soto A."/>
            <person name="Moreno-Hagelsieb G."/>
            <person name="Janga S.C."/>
            <person name="Ramirez M.A."/>
            <person name="Jimenez-Jacinto V."/>
            <person name="Collado-Vides J."/>
            <person name="Davila G."/>
        </authorList>
    </citation>
    <scope>NUCLEOTIDE SEQUENCE [LARGE SCALE GENOMIC DNA]</scope>
    <source>
        <strain>ATCC 51251 / DSM 11541 / JCM 21823 / NBRC 15573 / CFN 42</strain>
    </source>
</reference>
<gene>
    <name evidence="1" type="primary">dnaK</name>
    <name type="ordered locus">RHE_CH00145</name>
</gene>